<keyword id="KW-0131">Cell cycle</keyword>
<keyword id="KW-0132">Cell division</keyword>
<keyword id="KW-0159">Chromosome partition</keyword>
<keyword id="KW-0963">Cytoplasm</keyword>
<evidence type="ECO:0000255" key="1">
    <source>
        <dbReference type="HAMAP-Rule" id="MF_01805"/>
    </source>
</evidence>
<feature type="chain" id="PRO_0000211119" description="Segregation and condensation protein A">
    <location>
        <begin position="1"/>
        <end position="234"/>
    </location>
</feature>
<name>SCPA_STRP8</name>
<gene>
    <name evidence="1" type="primary">scpA</name>
    <name type="ordered locus">spyM18_0416</name>
</gene>
<organism>
    <name type="scientific">Streptococcus pyogenes serotype M18 (strain MGAS8232)</name>
    <dbReference type="NCBI Taxonomy" id="186103"/>
    <lineage>
        <taxon>Bacteria</taxon>
        <taxon>Bacillati</taxon>
        <taxon>Bacillota</taxon>
        <taxon>Bacilli</taxon>
        <taxon>Lactobacillales</taxon>
        <taxon>Streptococcaceae</taxon>
        <taxon>Streptococcus</taxon>
    </lineage>
</organism>
<reference key="1">
    <citation type="journal article" date="2002" name="Proc. Natl. Acad. Sci. U.S.A.">
        <title>Genome sequence and comparative microarray analysis of serotype M18 group A Streptococcus strains associated with acute rheumatic fever outbreaks.</title>
        <authorList>
            <person name="Smoot J.C."/>
            <person name="Barbian K.D."/>
            <person name="Van Gompel J.J."/>
            <person name="Smoot L.M."/>
            <person name="Chaussee M.S."/>
            <person name="Sylva G.L."/>
            <person name="Sturdevant D.E."/>
            <person name="Ricklefs S.M."/>
            <person name="Porcella S.F."/>
            <person name="Parkins L.D."/>
            <person name="Beres S.B."/>
            <person name="Campbell D.S."/>
            <person name="Smith T.M."/>
            <person name="Zhang Q."/>
            <person name="Kapur V."/>
            <person name="Daly J.A."/>
            <person name="Veasy L.G."/>
            <person name="Musser J.M."/>
        </authorList>
    </citation>
    <scope>NUCLEOTIDE SEQUENCE [LARGE SCALE GENOMIC DNA]</scope>
    <source>
        <strain>MGAS8232</strain>
    </source>
</reference>
<comment type="function">
    <text evidence="1">Participates in chromosomal partition during cell division. May act via the formation of a condensin-like complex containing Smc and ScpB that pull DNA away from mid-cell into both cell halves.</text>
</comment>
<comment type="subunit">
    <text evidence="1">Component of a cohesin-like complex composed of ScpA, ScpB and the Smc homodimer, in which ScpA and ScpB bind to the head domain of Smc. The presence of the three proteins is required for the association of the complex with DNA.</text>
</comment>
<comment type="subcellular location">
    <subcellularLocation>
        <location evidence="1">Cytoplasm</location>
    </subcellularLocation>
    <text evidence="1">Associated with two foci at the outer edges of the nucleoid region in young cells, and at four foci within both cell halves in older cells.</text>
</comment>
<comment type="similarity">
    <text evidence="1">Belongs to the ScpA family.</text>
</comment>
<proteinExistence type="inferred from homology"/>
<accession>Q8P2C9</accession>
<protein>
    <recommendedName>
        <fullName evidence="1">Segregation and condensation protein A</fullName>
    </recommendedName>
</protein>
<sequence length="234" mass="27443">MDIKLKDFEGPLDLLLHLVSQYKVDIYEVPIVEVIEQYLNYIETLQVMKLEVAGDYMLMASQLMLIKSRRLLPKVVEHIEEEDLEQDLLEKIEEYSRFKTVSQALAKQHDQRAKWYSKPKQELIFEDAILQEDKTVMDLFLAFSNIMAAKRAVLKNNHTVIERDDYKIEDMMASIKQRLEKENVISLSAIFEECQTLNEVISIFLASLELIKLHVVFVEQFSNFGAIILRKEKK</sequence>
<dbReference type="EMBL" id="AE009949">
    <property type="protein sequence ID" value="AAL97159.1"/>
    <property type="molecule type" value="Genomic_DNA"/>
</dbReference>
<dbReference type="RefSeq" id="WP_011017407.1">
    <property type="nucleotide sequence ID" value="NC_003485.1"/>
</dbReference>
<dbReference type="SMR" id="Q8P2C9"/>
<dbReference type="KEGG" id="spm:spyM18_0416"/>
<dbReference type="HOGENOM" id="CLU_038686_3_3_9"/>
<dbReference type="GO" id="GO:0005737">
    <property type="term" value="C:cytoplasm"/>
    <property type="evidence" value="ECO:0007669"/>
    <property type="project" value="UniProtKB-SubCell"/>
</dbReference>
<dbReference type="GO" id="GO:0051301">
    <property type="term" value="P:cell division"/>
    <property type="evidence" value="ECO:0007669"/>
    <property type="project" value="UniProtKB-KW"/>
</dbReference>
<dbReference type="GO" id="GO:0007059">
    <property type="term" value="P:chromosome segregation"/>
    <property type="evidence" value="ECO:0007669"/>
    <property type="project" value="UniProtKB-UniRule"/>
</dbReference>
<dbReference type="GO" id="GO:0006260">
    <property type="term" value="P:DNA replication"/>
    <property type="evidence" value="ECO:0007669"/>
    <property type="project" value="UniProtKB-UniRule"/>
</dbReference>
<dbReference type="Gene3D" id="6.10.250.2410">
    <property type="match status" value="1"/>
</dbReference>
<dbReference type="HAMAP" id="MF_01805">
    <property type="entry name" value="ScpA"/>
    <property type="match status" value="1"/>
</dbReference>
<dbReference type="InterPro" id="IPR003768">
    <property type="entry name" value="ScpA"/>
</dbReference>
<dbReference type="NCBIfam" id="NF000993">
    <property type="entry name" value="PRK00104.1-2"/>
    <property type="match status" value="1"/>
</dbReference>
<dbReference type="PANTHER" id="PTHR33969">
    <property type="entry name" value="SEGREGATION AND CONDENSATION PROTEIN A"/>
    <property type="match status" value="1"/>
</dbReference>
<dbReference type="PANTHER" id="PTHR33969:SF2">
    <property type="entry name" value="SEGREGATION AND CONDENSATION PROTEIN A"/>
    <property type="match status" value="1"/>
</dbReference>
<dbReference type="Pfam" id="PF02616">
    <property type="entry name" value="SMC_ScpA"/>
    <property type="match status" value="1"/>
</dbReference>